<comment type="function">
    <text evidence="1">Component of the cytochrome b6-f complex, which mediates electron transfer between photosystem II (PSII) and photosystem I (PSI), cyclic electron flow around PSI, and state transitions.</text>
</comment>
<comment type="cofactor">
    <cofactor evidence="1">
        <name>heme b</name>
        <dbReference type="ChEBI" id="CHEBI:60344"/>
    </cofactor>
    <text evidence="1">Binds 2 heme b groups non-covalently with two histidine residues as axial ligands.</text>
</comment>
<comment type="cofactor">
    <cofactor evidence="1">
        <name>heme c</name>
        <dbReference type="ChEBI" id="CHEBI:61717"/>
    </cofactor>
    <text evidence="1">Binds one heme group covalently by a single cysteine link with no axial amino acid ligand. This heme was named heme ci.</text>
</comment>
<comment type="subunit">
    <text evidence="1">The 4 large subunits of the cytochrome b6-f complex are cytochrome b6, subunit IV (17 kDa polypeptide, PetD), cytochrome f and the Rieske protein, while the 4 small subunits are PetG, PetL, PetM and PetN. The complex functions as a dimer.</text>
</comment>
<comment type="subcellular location">
    <subcellularLocation>
        <location evidence="1">Cellular thylakoid membrane</location>
        <topology evidence="1">Multi-pass membrane protein</topology>
    </subcellularLocation>
</comment>
<comment type="miscellaneous">
    <text evidence="1">Heme 1 (or BH or b566) is high-potential and absorbs at about 566 nm, and heme 2 (or BL or b562) is low-potential and absorbs at about 562 nm.</text>
</comment>
<comment type="similarity">
    <text evidence="1">Belongs to the cytochrome b family. PetB subfamily.</text>
</comment>
<name>CYB6_PROHO</name>
<sequence length="222" mass="25195">MFTKQVQESGVYKWFNDRLEIEAISDDISSKYVPPHVNIFYCLGGITLVCFIIQFATGFAMTFYYKPSVTEAFTSVQYLMNEVSFGWLIRSIHRWSASMMVLMMILHVFRVYLTGGFKNPRELTWITGVILAVITVSFGVTGYSLPWDQVGYWAVKIVSGVPEAIPLVGPLMVELIRGSASVGQATLTRFYSLHTFVLPWFIAVFMLMHFLMIRKQGISGPL</sequence>
<keyword id="KW-0249">Electron transport</keyword>
<keyword id="KW-0349">Heme</keyword>
<keyword id="KW-0408">Iron</keyword>
<keyword id="KW-0472">Membrane</keyword>
<keyword id="KW-0479">Metal-binding</keyword>
<keyword id="KW-0602">Photosynthesis</keyword>
<keyword id="KW-0793">Thylakoid</keyword>
<keyword id="KW-0812">Transmembrane</keyword>
<keyword id="KW-1133">Transmembrane helix</keyword>
<keyword id="KW-0813">Transport</keyword>
<dbReference type="EMBL" id="X60313">
    <property type="protein sequence ID" value="CAA42859.1"/>
    <property type="molecule type" value="Genomic_DNA"/>
</dbReference>
<dbReference type="PIR" id="S22470">
    <property type="entry name" value="S22470"/>
</dbReference>
<dbReference type="RefSeq" id="WP_026099704.1">
    <property type="nucleotide sequence ID" value="NZ_JBEIME010000226.1"/>
</dbReference>
<dbReference type="SMR" id="P28058"/>
<dbReference type="GO" id="GO:0031676">
    <property type="term" value="C:plasma membrane-derived thylakoid membrane"/>
    <property type="evidence" value="ECO:0007669"/>
    <property type="project" value="UniProtKB-SubCell"/>
</dbReference>
<dbReference type="GO" id="GO:0045158">
    <property type="term" value="F:electron transporter, transferring electrons within cytochrome b6/f complex of photosystem II activity"/>
    <property type="evidence" value="ECO:0007669"/>
    <property type="project" value="UniProtKB-UniRule"/>
</dbReference>
<dbReference type="GO" id="GO:0046872">
    <property type="term" value="F:metal ion binding"/>
    <property type="evidence" value="ECO:0007669"/>
    <property type="project" value="UniProtKB-KW"/>
</dbReference>
<dbReference type="GO" id="GO:0016491">
    <property type="term" value="F:oxidoreductase activity"/>
    <property type="evidence" value="ECO:0007669"/>
    <property type="project" value="InterPro"/>
</dbReference>
<dbReference type="GO" id="GO:0015979">
    <property type="term" value="P:photosynthesis"/>
    <property type="evidence" value="ECO:0007669"/>
    <property type="project" value="UniProtKB-UniRule"/>
</dbReference>
<dbReference type="GO" id="GO:0022904">
    <property type="term" value="P:respiratory electron transport chain"/>
    <property type="evidence" value="ECO:0007669"/>
    <property type="project" value="InterPro"/>
</dbReference>
<dbReference type="CDD" id="cd00284">
    <property type="entry name" value="Cytochrome_b_N"/>
    <property type="match status" value="1"/>
</dbReference>
<dbReference type="FunFam" id="1.20.810.10:FF:000001">
    <property type="entry name" value="Cytochrome b6"/>
    <property type="match status" value="1"/>
</dbReference>
<dbReference type="Gene3D" id="1.20.810.10">
    <property type="entry name" value="Cytochrome Bc1 Complex, Chain C"/>
    <property type="match status" value="1"/>
</dbReference>
<dbReference type="HAMAP" id="MF_00633">
    <property type="entry name" value="Cytb6_f_cytb6"/>
    <property type="match status" value="1"/>
</dbReference>
<dbReference type="InterPro" id="IPR005797">
    <property type="entry name" value="Cyt_b/b6_N"/>
</dbReference>
<dbReference type="InterPro" id="IPR023530">
    <property type="entry name" value="Cyt_B6_PetB"/>
</dbReference>
<dbReference type="InterPro" id="IPR027387">
    <property type="entry name" value="Cytb/b6-like_sf"/>
</dbReference>
<dbReference type="InterPro" id="IPR048259">
    <property type="entry name" value="Cytochrome_b_N_euk/bac"/>
</dbReference>
<dbReference type="InterPro" id="IPR016174">
    <property type="entry name" value="Di-haem_cyt_TM"/>
</dbReference>
<dbReference type="NCBIfam" id="NF002990">
    <property type="entry name" value="PRK03735.1"/>
    <property type="match status" value="1"/>
</dbReference>
<dbReference type="PANTHER" id="PTHR19271">
    <property type="entry name" value="CYTOCHROME B"/>
    <property type="match status" value="1"/>
</dbReference>
<dbReference type="PANTHER" id="PTHR19271:SF16">
    <property type="entry name" value="CYTOCHROME B"/>
    <property type="match status" value="1"/>
</dbReference>
<dbReference type="Pfam" id="PF00033">
    <property type="entry name" value="Cytochrome_B"/>
    <property type="match status" value="1"/>
</dbReference>
<dbReference type="PIRSF" id="PIRSF000032">
    <property type="entry name" value="Cytochrome_b6"/>
    <property type="match status" value="1"/>
</dbReference>
<dbReference type="SUPFAM" id="SSF81342">
    <property type="entry name" value="Transmembrane di-heme cytochromes"/>
    <property type="match status" value="1"/>
</dbReference>
<dbReference type="PROSITE" id="PS51002">
    <property type="entry name" value="CYTB_NTER"/>
    <property type="match status" value="1"/>
</dbReference>
<organism>
    <name type="scientific">Prochlorothrix hollandica</name>
    <dbReference type="NCBI Taxonomy" id="1223"/>
    <lineage>
        <taxon>Bacteria</taxon>
        <taxon>Bacillati</taxon>
        <taxon>Cyanobacteriota</taxon>
        <taxon>Cyanophyceae</taxon>
        <taxon>Prochlorotrichales</taxon>
        <taxon>Prochlorotrichaceae</taxon>
        <taxon>Prochlorothrix</taxon>
    </lineage>
</organism>
<gene>
    <name evidence="1" type="primary">petB</name>
</gene>
<reference key="1">
    <citation type="journal article" date="1992" name="Plant Mol. Biol.">
        <title>Conserved relationship between psbH and petBD genes: presence of a shared upstream element in Prochlorothrix hollandica.</title>
        <authorList>
            <person name="Greer K.L."/>
            <person name="Golden S.S."/>
        </authorList>
    </citation>
    <scope>NUCLEOTIDE SEQUENCE [GENOMIC DNA]</scope>
</reference>
<accession>P28058</accession>
<proteinExistence type="inferred from homology"/>
<feature type="chain" id="PRO_0000061829" description="Cytochrome b6">
    <location>
        <begin position="1"/>
        <end position="222"/>
    </location>
</feature>
<feature type="transmembrane region" description="Helical" evidence="1">
    <location>
        <begin position="39"/>
        <end position="59"/>
    </location>
</feature>
<feature type="transmembrane region" description="Helical" evidence="1">
    <location>
        <begin position="97"/>
        <end position="117"/>
    </location>
</feature>
<feature type="transmembrane region" description="Helical" evidence="1">
    <location>
        <begin position="123"/>
        <end position="143"/>
    </location>
</feature>
<feature type="transmembrane region" description="Helical" evidence="1">
    <location>
        <begin position="193"/>
        <end position="213"/>
    </location>
</feature>
<feature type="binding site" description="covalent" evidence="1">
    <location>
        <position position="42"/>
    </location>
    <ligand>
        <name>heme c</name>
        <dbReference type="ChEBI" id="CHEBI:61717"/>
    </ligand>
</feature>
<feature type="binding site" description="axial binding residue" evidence="1">
    <location>
        <position position="93"/>
    </location>
    <ligand>
        <name>heme b</name>
        <dbReference type="ChEBI" id="CHEBI:60344"/>
        <label>2</label>
    </ligand>
    <ligandPart>
        <name>Fe</name>
        <dbReference type="ChEBI" id="CHEBI:18248"/>
    </ligandPart>
</feature>
<feature type="binding site" description="axial binding residue" evidence="1">
    <location>
        <position position="107"/>
    </location>
    <ligand>
        <name>heme b</name>
        <dbReference type="ChEBI" id="CHEBI:60344"/>
        <label>1</label>
    </ligand>
    <ligandPart>
        <name>Fe</name>
        <dbReference type="ChEBI" id="CHEBI:18248"/>
    </ligandPart>
</feature>
<feature type="binding site" description="axial binding residue" evidence="1">
    <location>
        <position position="194"/>
    </location>
    <ligand>
        <name>heme b</name>
        <dbReference type="ChEBI" id="CHEBI:60344"/>
        <label>2</label>
    </ligand>
    <ligandPart>
        <name>Fe</name>
        <dbReference type="ChEBI" id="CHEBI:18248"/>
    </ligandPart>
</feature>
<feature type="binding site" description="axial binding residue" evidence="1">
    <location>
        <position position="209"/>
    </location>
    <ligand>
        <name>heme b</name>
        <dbReference type="ChEBI" id="CHEBI:60344"/>
        <label>1</label>
    </ligand>
    <ligandPart>
        <name>Fe</name>
        <dbReference type="ChEBI" id="CHEBI:18248"/>
    </ligandPart>
</feature>
<evidence type="ECO:0000255" key="1">
    <source>
        <dbReference type="HAMAP-Rule" id="MF_00633"/>
    </source>
</evidence>
<protein>
    <recommendedName>
        <fullName evidence="1">Cytochrome b6</fullName>
    </recommendedName>
</protein>